<name>TYR2_HAHS4</name>
<dbReference type="EC" id="1.14.18.1" evidence="2"/>
<dbReference type="EMBL" id="MRYI01000001">
    <property type="protein sequence ID" value="OZG75462.1"/>
    <property type="molecule type" value="Genomic_DNA"/>
</dbReference>
<dbReference type="RefSeq" id="WP_094705999.1">
    <property type="nucleotide sequence ID" value="NZ_MRYI01000001.1"/>
</dbReference>
<dbReference type="OrthoDB" id="2874181at2"/>
<dbReference type="Proteomes" id="UP000215632">
    <property type="component" value="Unassembled WGS sequence"/>
</dbReference>
<dbReference type="GO" id="GO:0046872">
    <property type="term" value="F:metal ion binding"/>
    <property type="evidence" value="ECO:0007669"/>
    <property type="project" value="UniProtKB-KW"/>
</dbReference>
<dbReference type="GO" id="GO:0016491">
    <property type="term" value="F:oxidoreductase activity"/>
    <property type="evidence" value="ECO:0007669"/>
    <property type="project" value="UniProtKB-KW"/>
</dbReference>
<dbReference type="Gene3D" id="1.10.1280.10">
    <property type="entry name" value="Di-copper center containing domain from catechol oxidase"/>
    <property type="match status" value="1"/>
</dbReference>
<dbReference type="InterPro" id="IPR008922">
    <property type="entry name" value="Di-copper_centre_dom_sf"/>
</dbReference>
<dbReference type="InterPro" id="IPR050316">
    <property type="entry name" value="Tyrosinase/Hemocyanin"/>
</dbReference>
<dbReference type="InterPro" id="IPR002227">
    <property type="entry name" value="Tyrosinase_Cu-bd"/>
</dbReference>
<dbReference type="PANTHER" id="PTHR11474:SF76">
    <property type="entry name" value="SHKT DOMAIN-CONTAINING PROTEIN"/>
    <property type="match status" value="1"/>
</dbReference>
<dbReference type="PANTHER" id="PTHR11474">
    <property type="entry name" value="TYROSINASE FAMILY MEMBER"/>
    <property type="match status" value="1"/>
</dbReference>
<dbReference type="Pfam" id="PF00264">
    <property type="entry name" value="Tyrosinase"/>
    <property type="match status" value="1"/>
</dbReference>
<dbReference type="PRINTS" id="PR00092">
    <property type="entry name" value="TYROSINASE"/>
</dbReference>
<dbReference type="SUPFAM" id="SSF48056">
    <property type="entry name" value="Di-copper centre-containing domain"/>
    <property type="match status" value="1"/>
</dbReference>
<dbReference type="PROSITE" id="PS00498">
    <property type="entry name" value="TYROSINASE_2"/>
    <property type="match status" value="1"/>
</dbReference>
<organism>
    <name type="scientific">Hahella sp. (strain CCB-MM4)</name>
    <dbReference type="NCBI Taxonomy" id="1926491"/>
    <lineage>
        <taxon>Bacteria</taxon>
        <taxon>Pseudomonadati</taxon>
        <taxon>Pseudomonadota</taxon>
        <taxon>Gammaproteobacteria</taxon>
        <taxon>Oceanospirillales</taxon>
        <taxon>Hahellaceae</taxon>
        <taxon>Hahella</taxon>
    </lineage>
</organism>
<gene>
    <name evidence="5" type="ORF">BTA51_03560</name>
</gene>
<comment type="function">
    <text evidence="2">Copper-containing oxidase that catalyzes the conversion of L-tyrosine to L-dopa and then to L-dopaquinone (PubMed:39382070). Can use various phenols such as p-coumaric acid, phenol, pyrocatechol, syringol or pyrogallol (PubMed:39382070). Accepts several of the constituents of lignin and potentially participates in lignin functionalization (PubMed:39382070).</text>
</comment>
<comment type="catalytic activity">
    <reaction evidence="2">
        <text>L-tyrosine + O2 = L-dopaquinone + H2O</text>
        <dbReference type="Rhea" id="RHEA:18117"/>
        <dbReference type="ChEBI" id="CHEBI:15377"/>
        <dbReference type="ChEBI" id="CHEBI:15379"/>
        <dbReference type="ChEBI" id="CHEBI:57924"/>
        <dbReference type="ChEBI" id="CHEBI:58315"/>
        <dbReference type="EC" id="1.14.18.1"/>
    </reaction>
</comment>
<comment type="catalytic activity">
    <reaction evidence="2">
        <text>2 L-tyrosine + O2 = 2 L-dopa</text>
        <dbReference type="Rhea" id="RHEA:34283"/>
        <dbReference type="ChEBI" id="CHEBI:15379"/>
        <dbReference type="ChEBI" id="CHEBI:57504"/>
        <dbReference type="ChEBI" id="CHEBI:58315"/>
    </reaction>
</comment>
<comment type="catalytic activity">
    <reaction evidence="2">
        <text>2 L-dopa + O2 = 2 L-dopaquinone + 2 H2O</text>
        <dbReference type="Rhea" id="RHEA:34287"/>
        <dbReference type="ChEBI" id="CHEBI:15377"/>
        <dbReference type="ChEBI" id="CHEBI:15379"/>
        <dbReference type="ChEBI" id="CHEBI:57504"/>
        <dbReference type="ChEBI" id="CHEBI:57924"/>
        <dbReference type="EC" id="1.14.18.1"/>
    </reaction>
</comment>
<comment type="cofactor">
    <cofactor evidence="2">
        <name>Cu(2+)</name>
        <dbReference type="ChEBI" id="CHEBI:29036"/>
    </cofactor>
    <text evidence="1">Binds 2 copper ions per subunit.</text>
</comment>
<comment type="biophysicochemical properties">
    <kinetics>
        <KM evidence="2">0.16 mM for L-tyrosine</KM>
        <KM evidence="2">0.196 mM for L-dopa</KM>
        <text evidence="2">kcat is 6.12 sec(-1) with L-tyrosine as substrate. kcat is 9.94 sec(-1) with L-dopa as substrate.</text>
    </kinetics>
    <phDependence>
        <text evidence="2">Optimum pH is between 4.5 and 6 (PubMed:39382070). Exhibits a rather narrow pH range of activity (over 50% of activity between pH 4 and 7) and no detectable activity above pH 8 (PubMed:39382070).</text>
    </phDependence>
    <temperatureDependence>
        <text evidence="2">Optimum temperature is approximately 40 degrees Celsius (PubMed:39382070). Activity goes below 50% under 25 degrees Celsius and past 45 degrees Celsius, and the enzyme no longer exhibits activity at 72 degrees Celsius (PubMed:39382070).</text>
    </temperatureDependence>
</comment>
<comment type="domain">
    <text evidence="2">Contains a C-terminal lid-domain (LID), which is not cleaved and is essential for activity and stability.</text>
</comment>
<comment type="similarity">
    <text evidence="4">Belongs to the tyrosinase family.</text>
</comment>
<sequence>MGDSSELNVRRSVRDLQAEYDRGNRKPLEDLIRAWKGIQELPPDDKRSFFILGGYHGEPFDYRNAVDALPPDDIYTYWGGWCNHGNVLFPTWHRIYILKLEEALQSIVPGVTLPFWDETSEETVKKGIPDVLTREYFELDGENIKNPLYSYTLPLSLSDNVPGDNKAYEKPAGYETVRYPLSGLVGTPEARAATAKHNAKYPNPIENTQLLNKNIIAWLHGSGKDEEGPTTTDPNPKGRGVKWMYEKCLSAPNYTVFSNTTSAGQWNLDHPAKSVVALEQPHNDVHLAVGGFDIPGQGESGQVADANGDMGENNTAALDPIFFFHHCNVDRMFWLWQKQNGFINKLEVITGYYGTNSSDSQGPTPGIPPGTPLDLNTPLNPFIKDEFGNPFTSMDCINIEEQLGYTYGPGSLDEVPKPEPITGGSTKKLTVRGINRGLFDGSFVIRAYASVPDAQGQLTEYYLGDHAVLSRRNVVKCANCLTHLEVIAHFPLDTLSADLVDKAEYWITIQHRGHSKRMKVDKDTGQSEKALLAQRAELPEKLKYSISVTD</sequence>
<feature type="chain" id="PRO_0000461819" description="Tyrosinase HcTyr2">
    <location>
        <begin position="1"/>
        <end position="550"/>
    </location>
</feature>
<feature type="binding site" evidence="1">
    <location>
        <position position="56"/>
    </location>
    <ligand>
        <name>Cu cation</name>
        <dbReference type="ChEBI" id="CHEBI:23378"/>
        <label>A</label>
    </ligand>
</feature>
<feature type="binding site" evidence="1">
    <location>
        <position position="84"/>
    </location>
    <ligand>
        <name>Cu cation</name>
        <dbReference type="ChEBI" id="CHEBI:23378"/>
        <label>A</label>
    </ligand>
</feature>
<feature type="binding site" evidence="1">
    <location>
        <position position="93"/>
    </location>
    <ligand>
        <name>Cu cation</name>
        <dbReference type="ChEBI" id="CHEBI:23378"/>
        <label>A</label>
    </ligand>
</feature>
<feature type="binding site" evidence="1">
    <location>
        <position position="282"/>
    </location>
    <ligand>
        <name>Cu cation</name>
        <dbReference type="ChEBI" id="CHEBI:23378"/>
        <label>B</label>
    </ligand>
</feature>
<feature type="binding site" evidence="1">
    <location>
        <position position="286"/>
    </location>
    <ligand>
        <name>Cu cation</name>
        <dbReference type="ChEBI" id="CHEBI:23378"/>
        <label>B</label>
    </ligand>
</feature>
<feature type="binding site" evidence="1">
    <location>
        <position position="326"/>
    </location>
    <ligand>
        <name>Cu cation</name>
        <dbReference type="ChEBI" id="CHEBI:23378"/>
        <label>B</label>
    </ligand>
</feature>
<feature type="mutagenesis site" description="Lacks the C-terminal lid-domain. Exhibits marginal activity and starts to precipitate shortly after purification." evidence="2">
    <location>
        <begin position="426"/>
        <end position="550"/>
    </location>
</feature>
<protein>
    <recommendedName>
        <fullName evidence="3">Tyrosinase HcTyr2</fullName>
        <ecNumber evidence="2">1.14.18.1</ecNumber>
    </recommendedName>
</protein>
<reference evidence="5" key="1">
    <citation type="journal article" date="2017" name="Genome Announc.">
        <title>Draft Genome Sequence of Halophilic Hahella sp. Strain CCB-MM4, Isolated from Matang Mangrove Forest in Perak, Malaysia.</title>
        <authorList>
            <person name="Sam K.K."/>
            <person name="Lau N.S."/>
            <person name="Furusawa G."/>
            <person name="Amirul A.A."/>
        </authorList>
    </citation>
    <scope>NUCLEOTIDE SEQUENCE [LARGE SCALE GENOMIC DNA]</scope>
    <source>
        <strain>CCB-MM4</strain>
    </source>
</reference>
<reference key="2">
    <citation type="journal article" date="2024" name="FEBS Open Bio">
        <title>Characterization of two bacterial tyrosinases from the halophilic bacterium Hahella sp. CCB MM4 relevant for phenolic compounds oxidation in wetlands.</title>
        <authorList>
            <person name="de Almeida Santos G."/>
            <person name="Englund A.N.B."/>
            <person name="Dalleywater E.L."/>
            <person name="Roehr A.K."/>
        </authorList>
    </citation>
    <scope>FUNCTION</scope>
    <scope>CATALYTIC ACTIVITY</scope>
    <scope>COFACTOR</scope>
    <scope>BIOPHYSICOCHEMICAL PROPERTIES</scope>
    <scope>DOMAIN</scope>
    <scope>MUTAGENESIS OF 426-THR--ASP-550</scope>
    <source>
        <strain>CCB-MM4</strain>
    </source>
</reference>
<accession>A0A261GVB1</accession>
<evidence type="ECO:0000250" key="1">
    <source>
        <dbReference type="UniProtKB" id="Q9ZP19"/>
    </source>
</evidence>
<evidence type="ECO:0000269" key="2">
    <source>
    </source>
</evidence>
<evidence type="ECO:0000303" key="3">
    <source>
    </source>
</evidence>
<evidence type="ECO:0000305" key="4"/>
<evidence type="ECO:0000312" key="5">
    <source>
        <dbReference type="EMBL" id="OZG75462.1"/>
    </source>
</evidence>
<proteinExistence type="evidence at protein level"/>
<keyword id="KW-0186">Copper</keyword>
<keyword id="KW-0479">Metal-binding</keyword>
<keyword id="KW-0560">Oxidoreductase</keyword>
<keyword id="KW-1185">Reference proteome</keyword>